<keyword id="KW-0963">Cytoplasm</keyword>
<keyword id="KW-0378">Hydrolase</keyword>
<keyword id="KW-0540">Nuclease</keyword>
<keyword id="KW-0690">Ribosome biogenesis</keyword>
<accession>B7N7K2</accession>
<gene>
    <name evidence="1" type="primary">yqgF</name>
    <name type="ordered locus">ECUMN_3301</name>
</gene>
<evidence type="ECO:0000255" key="1">
    <source>
        <dbReference type="HAMAP-Rule" id="MF_00651"/>
    </source>
</evidence>
<name>YQGF_ECOLU</name>
<organism>
    <name type="scientific">Escherichia coli O17:K52:H18 (strain UMN026 / ExPEC)</name>
    <dbReference type="NCBI Taxonomy" id="585056"/>
    <lineage>
        <taxon>Bacteria</taxon>
        <taxon>Pseudomonadati</taxon>
        <taxon>Pseudomonadota</taxon>
        <taxon>Gammaproteobacteria</taxon>
        <taxon>Enterobacterales</taxon>
        <taxon>Enterobacteriaceae</taxon>
        <taxon>Escherichia</taxon>
    </lineage>
</organism>
<proteinExistence type="inferred from homology"/>
<comment type="function">
    <text evidence="1">Could be a nuclease involved in processing of the 5'-end of pre-16S rRNA.</text>
</comment>
<comment type="subcellular location">
    <subcellularLocation>
        <location evidence="1">Cytoplasm</location>
    </subcellularLocation>
</comment>
<comment type="similarity">
    <text evidence="1">Belongs to the YqgF nuclease family.</text>
</comment>
<feature type="chain" id="PRO_1000131032" description="Putative pre-16S rRNA nuclease">
    <location>
        <begin position="1"/>
        <end position="138"/>
    </location>
</feature>
<sequence length="138" mass="15186">MSGTLLAFDFGTKSIGVAVGQRITGTARPLPAIKAQDGTPDWNLIERLLKEWQPDEIIVGLPLNMDGTEQPLTARARKFANRIHGRFGVEVKLHDERLSTVEARSGLFEQGGYRALNKGKVDSASAVIILESYFEQGY</sequence>
<protein>
    <recommendedName>
        <fullName evidence="1">Putative pre-16S rRNA nuclease</fullName>
        <ecNumber evidence="1">3.1.-.-</ecNumber>
    </recommendedName>
</protein>
<dbReference type="EC" id="3.1.-.-" evidence="1"/>
<dbReference type="EMBL" id="CU928163">
    <property type="protein sequence ID" value="CAR14464.1"/>
    <property type="molecule type" value="Genomic_DNA"/>
</dbReference>
<dbReference type="RefSeq" id="YP_002413983.1">
    <property type="nucleotide sequence ID" value="NC_011751.1"/>
</dbReference>
<dbReference type="SMR" id="B7N7K2"/>
<dbReference type="STRING" id="585056.ECUMN_3301"/>
<dbReference type="KEGG" id="eum:ECUMN_3301"/>
<dbReference type="PATRIC" id="fig|585056.7.peg.3479"/>
<dbReference type="HOGENOM" id="CLU_098240_3_0_6"/>
<dbReference type="Proteomes" id="UP000007097">
    <property type="component" value="Chromosome"/>
</dbReference>
<dbReference type="GO" id="GO:0005829">
    <property type="term" value="C:cytosol"/>
    <property type="evidence" value="ECO:0007669"/>
    <property type="project" value="TreeGrafter"/>
</dbReference>
<dbReference type="GO" id="GO:0004518">
    <property type="term" value="F:nuclease activity"/>
    <property type="evidence" value="ECO:0007669"/>
    <property type="project" value="UniProtKB-KW"/>
</dbReference>
<dbReference type="GO" id="GO:0000967">
    <property type="term" value="P:rRNA 5'-end processing"/>
    <property type="evidence" value="ECO:0007669"/>
    <property type="project" value="UniProtKB-UniRule"/>
</dbReference>
<dbReference type="CDD" id="cd16964">
    <property type="entry name" value="YqgF"/>
    <property type="match status" value="1"/>
</dbReference>
<dbReference type="FunFam" id="3.30.420.140:FF:000002">
    <property type="entry name" value="Putative pre-16S rRNA nuclease"/>
    <property type="match status" value="1"/>
</dbReference>
<dbReference type="Gene3D" id="3.30.420.140">
    <property type="entry name" value="YqgF/RNase H-like domain"/>
    <property type="match status" value="1"/>
</dbReference>
<dbReference type="HAMAP" id="MF_00651">
    <property type="entry name" value="Nuclease_YqgF"/>
    <property type="match status" value="1"/>
</dbReference>
<dbReference type="InterPro" id="IPR012337">
    <property type="entry name" value="RNaseH-like_sf"/>
</dbReference>
<dbReference type="InterPro" id="IPR005227">
    <property type="entry name" value="YqgF"/>
</dbReference>
<dbReference type="InterPro" id="IPR006641">
    <property type="entry name" value="YqgF/RNaseH-like_dom"/>
</dbReference>
<dbReference type="InterPro" id="IPR037027">
    <property type="entry name" value="YqgF/RNaseH-like_dom_sf"/>
</dbReference>
<dbReference type="NCBIfam" id="TIGR00250">
    <property type="entry name" value="RNAse_H_YqgF"/>
    <property type="match status" value="1"/>
</dbReference>
<dbReference type="PANTHER" id="PTHR33317">
    <property type="entry name" value="POLYNUCLEOTIDYL TRANSFERASE, RIBONUCLEASE H-LIKE SUPERFAMILY PROTEIN"/>
    <property type="match status" value="1"/>
</dbReference>
<dbReference type="PANTHER" id="PTHR33317:SF4">
    <property type="entry name" value="POLYNUCLEOTIDYL TRANSFERASE, RIBONUCLEASE H-LIKE SUPERFAMILY PROTEIN"/>
    <property type="match status" value="1"/>
</dbReference>
<dbReference type="Pfam" id="PF03652">
    <property type="entry name" value="RuvX"/>
    <property type="match status" value="1"/>
</dbReference>
<dbReference type="SMART" id="SM00732">
    <property type="entry name" value="YqgFc"/>
    <property type="match status" value="1"/>
</dbReference>
<dbReference type="SUPFAM" id="SSF53098">
    <property type="entry name" value="Ribonuclease H-like"/>
    <property type="match status" value="1"/>
</dbReference>
<reference key="1">
    <citation type="journal article" date="2009" name="PLoS Genet.">
        <title>Organised genome dynamics in the Escherichia coli species results in highly diverse adaptive paths.</title>
        <authorList>
            <person name="Touchon M."/>
            <person name="Hoede C."/>
            <person name="Tenaillon O."/>
            <person name="Barbe V."/>
            <person name="Baeriswyl S."/>
            <person name="Bidet P."/>
            <person name="Bingen E."/>
            <person name="Bonacorsi S."/>
            <person name="Bouchier C."/>
            <person name="Bouvet O."/>
            <person name="Calteau A."/>
            <person name="Chiapello H."/>
            <person name="Clermont O."/>
            <person name="Cruveiller S."/>
            <person name="Danchin A."/>
            <person name="Diard M."/>
            <person name="Dossat C."/>
            <person name="Karoui M.E."/>
            <person name="Frapy E."/>
            <person name="Garry L."/>
            <person name="Ghigo J.M."/>
            <person name="Gilles A.M."/>
            <person name="Johnson J."/>
            <person name="Le Bouguenec C."/>
            <person name="Lescat M."/>
            <person name="Mangenot S."/>
            <person name="Martinez-Jehanne V."/>
            <person name="Matic I."/>
            <person name="Nassif X."/>
            <person name="Oztas S."/>
            <person name="Petit M.A."/>
            <person name="Pichon C."/>
            <person name="Rouy Z."/>
            <person name="Ruf C.S."/>
            <person name="Schneider D."/>
            <person name="Tourret J."/>
            <person name="Vacherie B."/>
            <person name="Vallenet D."/>
            <person name="Medigue C."/>
            <person name="Rocha E.P.C."/>
            <person name="Denamur E."/>
        </authorList>
    </citation>
    <scope>NUCLEOTIDE SEQUENCE [LARGE SCALE GENOMIC DNA]</scope>
    <source>
        <strain>UMN026 / ExPEC</strain>
    </source>
</reference>